<proteinExistence type="inferred from homology"/>
<geneLocation type="chloroplast"/>
<comment type="subcellular location">
    <subcellularLocation>
        <location>Plastid</location>
        <location>Chloroplast</location>
    </subcellularLocation>
</comment>
<comment type="similarity">
    <text evidence="1">Belongs to the ycf35 family.</text>
</comment>
<keyword id="KW-0150">Chloroplast</keyword>
<keyword id="KW-0934">Plastid</keyword>
<dbReference type="EMBL" id="Z67753">
    <property type="protein sequence ID" value="CAA91656.1"/>
    <property type="molecule type" value="Genomic_DNA"/>
</dbReference>
<dbReference type="PIR" id="S78283">
    <property type="entry name" value="S78283"/>
</dbReference>
<dbReference type="RefSeq" id="NP_043624.1">
    <property type="nucleotide sequence ID" value="NC_001713.1"/>
</dbReference>
<dbReference type="GeneID" id="801742"/>
<dbReference type="GO" id="GO:0009507">
    <property type="term" value="C:chloroplast"/>
    <property type="evidence" value="ECO:0007669"/>
    <property type="project" value="UniProtKB-SubCell"/>
</dbReference>
<dbReference type="InterPro" id="IPR009666">
    <property type="entry name" value="Uncharacterised_Ycf35"/>
</dbReference>
<dbReference type="PANTHER" id="PTHR39638">
    <property type="entry name" value="YCF35"/>
    <property type="match status" value="1"/>
</dbReference>
<dbReference type="PANTHER" id="PTHR39638:SF2">
    <property type="entry name" value="YCF35"/>
    <property type="match status" value="1"/>
</dbReference>
<dbReference type="Pfam" id="PF06868">
    <property type="entry name" value="DUF1257"/>
    <property type="match status" value="1"/>
</dbReference>
<name>YCF35_TRICV</name>
<feature type="chain" id="PRO_0000217349" description="Uncharacterized protein ycf35">
    <location>
        <begin position="1"/>
        <end position="128"/>
    </location>
</feature>
<reference key="1">
    <citation type="journal article" date="1995" name="Plant Mol. Biol. Rep.">
        <title>The chloroplast genome of a chlorophyll a+c-containing alga, Odontella sinensis.</title>
        <authorList>
            <person name="Kowallik K.V."/>
            <person name="Stoebe B."/>
            <person name="Schaffran I."/>
            <person name="Kroth-Pancic P."/>
            <person name="Freier U."/>
        </authorList>
    </citation>
    <scope>NUCLEOTIDE SEQUENCE [LARGE SCALE GENOMIC DNA]</scope>
</reference>
<gene>
    <name type="primary">ycf35</name>
</gene>
<accession>P49533</accession>
<protein>
    <recommendedName>
        <fullName>Uncharacterized protein ycf35</fullName>
    </recommendedName>
</protein>
<organism>
    <name type="scientific">Trieres chinensis</name>
    <name type="common">Marine centric diatom</name>
    <name type="synonym">Odontella sinensis</name>
    <dbReference type="NCBI Taxonomy" id="1514140"/>
    <lineage>
        <taxon>Eukaryota</taxon>
        <taxon>Sar</taxon>
        <taxon>Stramenopiles</taxon>
        <taxon>Ochrophyta</taxon>
        <taxon>Bacillariophyta</taxon>
        <taxon>Mediophyceae</taxon>
        <taxon>Biddulphiophycidae</taxon>
        <taxon>Eupodiscales</taxon>
        <taxon>Parodontellaceae</taxon>
        <taxon>Trieres</taxon>
    </lineage>
</organism>
<sequence>MSHFTNIETRFQNLFYLEKALNKLDINHKPQKKVTNINSKSYDIDINLMISQPNGYDIEFCWNGQEYELIADTSFWQQKDSIKGFINNIAKQYAGEVIIGESKKIGFQPIKYQQNKDGSNTCYFTTLE</sequence>
<evidence type="ECO:0000305" key="1"/>